<name>ACOX1_ARATH</name>
<keyword id="KW-0002">3D-structure</keyword>
<keyword id="KW-0025">Alternative splicing</keyword>
<keyword id="KW-1015">Disulfide bond</keyword>
<keyword id="KW-0274">FAD</keyword>
<keyword id="KW-0276">Fatty acid metabolism</keyword>
<keyword id="KW-0285">Flavoprotein</keyword>
<keyword id="KW-0443">Lipid metabolism</keyword>
<keyword id="KW-0560">Oxidoreductase</keyword>
<keyword id="KW-0576">Peroxisome</keyword>
<keyword id="KW-1185">Reference proteome</keyword>
<proteinExistence type="evidence at protein level"/>
<feature type="chain" id="PRO_0000204689" description="Peroxisomal acyl-coenzyme A oxidase 1">
    <location>
        <begin position="1"/>
        <end position="664"/>
    </location>
</feature>
<feature type="short sequence motif" description="Microbody targeting signal" evidence="1">
    <location>
        <begin position="662"/>
        <end position="664"/>
    </location>
</feature>
<feature type="active site" description="Proton acceptor" evidence="7">
    <location>
        <position position="424"/>
    </location>
</feature>
<feature type="binding site" evidence="4 11">
    <location>
        <position position="135"/>
    </location>
    <ligand>
        <name>FAD</name>
        <dbReference type="ChEBI" id="CHEBI:57692"/>
    </ligand>
</feature>
<feature type="binding site" evidence="4 11">
    <location>
        <position position="137"/>
    </location>
    <ligand>
        <name>FAD</name>
        <dbReference type="ChEBI" id="CHEBI:57692"/>
    </ligand>
</feature>
<feature type="binding site" evidence="4 11">
    <location>
        <position position="138"/>
    </location>
    <ligand>
        <name>FAD</name>
        <dbReference type="ChEBI" id="CHEBI:57692"/>
    </ligand>
</feature>
<feature type="binding site" evidence="4 11">
    <location>
        <position position="144"/>
    </location>
    <ligand>
        <name>FAD</name>
        <dbReference type="ChEBI" id="CHEBI:57692"/>
    </ligand>
</feature>
<feature type="binding site" evidence="4 11">
    <location>
        <position position="177"/>
    </location>
    <ligand>
        <name>FAD</name>
        <dbReference type="ChEBI" id="CHEBI:57692"/>
    </ligand>
</feature>
<feature type="binding site" evidence="4 11">
    <location>
        <position position="310"/>
    </location>
    <ligand>
        <name>FAD</name>
        <dbReference type="ChEBI" id="CHEBI:57692"/>
    </ligand>
</feature>
<feature type="binding site" evidence="4 11">
    <location>
        <position position="330"/>
    </location>
    <ligand>
        <name>FAD</name>
        <dbReference type="ChEBI" id="CHEBI:57692"/>
    </ligand>
</feature>
<feature type="binding site" evidence="4 11">
    <location>
        <position position="333"/>
    </location>
    <ligand>
        <name>FAD</name>
        <dbReference type="ChEBI" id="CHEBI:57692"/>
    </ligand>
</feature>
<feature type="binding site" evidence="4 11">
    <location>
        <position position="401"/>
    </location>
    <ligand>
        <name>FAD</name>
        <dbReference type="ChEBI" id="CHEBI:57692"/>
    </ligand>
</feature>
<feature type="binding site" evidence="4 11">
    <location>
        <position position="422"/>
    </location>
    <ligand>
        <name>FAD</name>
        <dbReference type="ChEBI" id="CHEBI:57692"/>
    </ligand>
</feature>
<feature type="binding site" evidence="4 11">
    <location>
        <position position="426"/>
    </location>
    <ligand>
        <name>FAD</name>
        <dbReference type="ChEBI" id="CHEBI:57692"/>
    </ligand>
</feature>
<feature type="disulfide bond" evidence="4 11">
    <location>
        <begin position="467"/>
        <end position="576"/>
    </location>
</feature>
<feature type="helix" evidence="12">
    <location>
        <begin position="8"/>
        <end position="11"/>
    </location>
</feature>
<feature type="helix" evidence="12">
    <location>
        <begin position="18"/>
        <end position="26"/>
    </location>
</feature>
<feature type="helix" evidence="12">
    <location>
        <begin position="29"/>
        <end position="43"/>
    </location>
</feature>
<feature type="helix" evidence="12">
    <location>
        <begin position="46"/>
        <end position="48"/>
    </location>
</feature>
<feature type="turn" evidence="12">
    <location>
        <begin position="51"/>
        <end position="54"/>
    </location>
</feature>
<feature type="helix" evidence="12">
    <location>
        <begin position="58"/>
        <end position="78"/>
    </location>
</feature>
<feature type="helix" evidence="12">
    <location>
        <begin position="83"/>
        <end position="93"/>
    </location>
</feature>
<feature type="helix" evidence="12">
    <location>
        <begin position="98"/>
        <end position="104"/>
    </location>
</feature>
<feature type="helix" evidence="12">
    <location>
        <begin position="106"/>
        <end position="113"/>
    </location>
</feature>
<feature type="helix" evidence="12">
    <location>
        <begin position="116"/>
        <end position="127"/>
    </location>
</feature>
<feature type="strand" evidence="12">
    <location>
        <begin position="133"/>
        <end position="136"/>
    </location>
</feature>
<feature type="strand" evidence="12">
    <location>
        <begin position="142"/>
        <end position="144"/>
    </location>
</feature>
<feature type="helix" evidence="12">
    <location>
        <begin position="146"/>
        <end position="148"/>
    </location>
</feature>
<feature type="strand" evidence="12">
    <location>
        <begin position="152"/>
        <end position="155"/>
    </location>
</feature>
<feature type="turn" evidence="12">
    <location>
        <begin position="157"/>
        <end position="159"/>
    </location>
</feature>
<feature type="strand" evidence="12">
    <location>
        <begin position="160"/>
        <end position="165"/>
    </location>
</feature>
<feature type="helix" evidence="12">
    <location>
        <begin position="169"/>
        <end position="171"/>
    </location>
</feature>
<feature type="strand" evidence="12">
    <location>
        <begin position="172"/>
        <end position="174"/>
    </location>
</feature>
<feature type="turn" evidence="12">
    <location>
        <begin position="177"/>
        <end position="182"/>
    </location>
</feature>
<feature type="strand" evidence="12">
    <location>
        <begin position="184"/>
        <end position="194"/>
    </location>
</feature>
<feature type="strand" evidence="12">
    <location>
        <begin position="197"/>
        <end position="207"/>
    </location>
</feature>
<feature type="turn" evidence="12">
    <location>
        <begin position="211"/>
        <end position="213"/>
    </location>
</feature>
<feature type="strand" evidence="12">
    <location>
        <begin position="220"/>
        <end position="224"/>
    </location>
</feature>
<feature type="strand" evidence="12">
    <location>
        <begin position="228"/>
        <end position="232"/>
    </location>
</feature>
<feature type="helix" evidence="12">
    <location>
        <begin position="233"/>
        <end position="236"/>
    </location>
</feature>
<feature type="strand" evidence="12">
    <location>
        <begin position="240"/>
        <end position="250"/>
    </location>
</feature>
<feature type="helix" evidence="12">
    <location>
        <begin position="251"/>
        <end position="253"/>
    </location>
</feature>
<feature type="strand" evidence="12">
    <location>
        <begin position="257"/>
        <end position="261"/>
    </location>
</feature>
<feature type="strand" evidence="12">
    <location>
        <begin position="267"/>
        <end position="269"/>
    </location>
</feature>
<feature type="helix" evidence="12">
    <location>
        <begin position="274"/>
        <end position="276"/>
    </location>
</feature>
<feature type="turn" evidence="12">
    <location>
        <begin position="278"/>
        <end position="282"/>
    </location>
</feature>
<feature type="helix" evidence="12">
    <location>
        <begin position="283"/>
        <end position="309"/>
    </location>
</feature>
<feature type="helix" evidence="12">
    <location>
        <begin position="324"/>
        <end position="326"/>
    </location>
</feature>
<feature type="helix" evidence="12">
    <location>
        <begin position="328"/>
        <end position="361"/>
    </location>
</feature>
<feature type="turn" evidence="12">
    <location>
        <begin position="362"/>
        <end position="365"/>
    </location>
</feature>
<feature type="helix" evidence="12">
    <location>
        <begin position="370"/>
        <end position="397"/>
    </location>
</feature>
<feature type="helix" evidence="12">
    <location>
        <begin position="398"/>
        <end position="404"/>
    </location>
</feature>
<feature type="helix" evidence="12">
    <location>
        <begin position="406"/>
        <end position="408"/>
    </location>
</feature>
<feature type="helix" evidence="12">
    <location>
        <begin position="410"/>
        <end position="417"/>
    </location>
</feature>
<feature type="helix" evidence="12">
    <location>
        <begin position="418"/>
        <end position="421"/>
    </location>
</feature>
<feature type="turn" evidence="12">
    <location>
        <begin position="422"/>
        <end position="424"/>
    </location>
</feature>
<feature type="helix" evidence="12">
    <location>
        <begin position="427"/>
        <end position="442"/>
    </location>
</feature>
<feature type="turn" evidence="12">
    <location>
        <begin position="443"/>
        <end position="447"/>
    </location>
</feature>
<feature type="helix" evidence="12">
    <location>
        <begin position="453"/>
        <end position="460"/>
    </location>
</feature>
<feature type="helix" evidence="12">
    <location>
        <begin position="461"/>
        <end position="464"/>
    </location>
</feature>
<feature type="helix" evidence="12">
    <location>
        <begin position="474"/>
        <end position="478"/>
    </location>
</feature>
<feature type="helix" evidence="12">
    <location>
        <begin position="480"/>
        <end position="502"/>
    </location>
</feature>
<feature type="strand" evidence="12">
    <location>
        <begin position="505"/>
        <end position="507"/>
    </location>
</feature>
<feature type="helix" evidence="12">
    <location>
        <begin position="508"/>
        <end position="514"/>
    </location>
</feature>
<feature type="helix" evidence="12">
    <location>
        <begin position="516"/>
        <end position="538"/>
    </location>
</feature>
<feature type="helix" evidence="12">
    <location>
        <begin position="548"/>
        <end position="566"/>
    </location>
</feature>
<feature type="helix" evidence="12">
    <location>
        <begin position="568"/>
        <end position="573"/>
    </location>
</feature>
<feature type="helix" evidence="12">
    <location>
        <begin position="579"/>
        <end position="596"/>
    </location>
</feature>
<feature type="helix" evidence="12">
    <location>
        <begin position="597"/>
        <end position="599"/>
    </location>
</feature>
<feature type="helix" evidence="12">
    <location>
        <begin position="600"/>
        <end position="605"/>
    </location>
</feature>
<feature type="helix" evidence="12">
    <location>
        <begin position="611"/>
        <end position="614"/>
    </location>
</feature>
<feature type="helix" evidence="12">
    <location>
        <begin position="626"/>
        <end position="635"/>
    </location>
</feature>
<feature type="helix" evidence="12">
    <location>
        <begin position="637"/>
        <end position="640"/>
    </location>
</feature>
<feature type="helix" evidence="12">
    <location>
        <begin position="647"/>
        <end position="650"/>
    </location>
</feature>
<feature type="helix" evidence="12">
    <location>
        <begin position="652"/>
        <end position="655"/>
    </location>
</feature>
<protein>
    <recommendedName>
        <fullName evidence="5">Peroxisomal acyl-coenzyme A oxidase 1</fullName>
        <shortName evidence="6">AOX 1</shortName>
        <ecNumber evidence="2">1.3.3.6</ecNumber>
    </recommendedName>
    <alternativeName>
        <fullName evidence="6">Long-chain acyl-CoA oxidase</fullName>
        <shortName evidence="5">AtCX1</shortName>
    </alternativeName>
</protein>
<reference key="1">
    <citation type="journal article" date="1999" name="Plant J.">
        <title>Long-chain acyl-CoA oxidases of Arabidopsis.</title>
        <authorList>
            <person name="Hooks M.A."/>
            <person name="Kellas F."/>
            <person name="Graham I.A."/>
        </authorList>
    </citation>
    <scope>NUCLEOTIDE SEQUENCE [MRNA]</scope>
    <scope>FUNCTION</scope>
    <scope>CATALYTIC ACTIVITY</scope>
    <scope>BIOPHYSICOCHEMICAL PROPERTIES</scope>
    <scope>DEVELOPMENTAL STAGE</scope>
    <scope>TISSUE SPECIFICITY</scope>
    <source>
        <strain>cv. Columbia</strain>
        <tissue>Seedling hypocotyl</tissue>
    </source>
</reference>
<reference key="2">
    <citation type="journal article" date="1998" name="Nature">
        <title>Analysis of 1.9 Mb of contiguous sequence from chromosome 4 of Arabidopsis thaliana.</title>
        <authorList>
            <person name="Bevan M."/>
            <person name="Bancroft I."/>
            <person name="Bent E."/>
            <person name="Love K."/>
            <person name="Goodman H.M."/>
            <person name="Dean C."/>
            <person name="Bergkamp R."/>
            <person name="Dirkse W."/>
            <person name="van Staveren M."/>
            <person name="Stiekema W."/>
            <person name="Drost L."/>
            <person name="Ridley P."/>
            <person name="Hudson S.-A."/>
            <person name="Patel K."/>
            <person name="Murphy G."/>
            <person name="Piffanelli P."/>
            <person name="Wedler H."/>
            <person name="Wedler E."/>
            <person name="Wambutt R."/>
            <person name="Weitzenegger T."/>
            <person name="Pohl T."/>
            <person name="Terryn N."/>
            <person name="Gielen J."/>
            <person name="Villarroel R."/>
            <person name="De Clercq R."/>
            <person name="van Montagu M."/>
            <person name="Lecharny A."/>
            <person name="Aubourg S."/>
            <person name="Gy I."/>
            <person name="Kreis M."/>
            <person name="Lao N."/>
            <person name="Kavanagh T."/>
            <person name="Hempel S."/>
            <person name="Kotter P."/>
            <person name="Entian K.-D."/>
            <person name="Rieger M."/>
            <person name="Schaefer M."/>
            <person name="Funk B."/>
            <person name="Mueller-Auer S."/>
            <person name="Silvey M."/>
            <person name="James R."/>
            <person name="Monfort A."/>
            <person name="Pons A."/>
            <person name="Puigdomenech P."/>
            <person name="Douka A."/>
            <person name="Voukelatou E."/>
            <person name="Milioni D."/>
            <person name="Hatzopoulos P."/>
            <person name="Piravandi E."/>
            <person name="Obermaier B."/>
            <person name="Hilbert H."/>
            <person name="Duesterhoeft A."/>
            <person name="Moores T."/>
            <person name="Jones J.D.G."/>
            <person name="Eneva T."/>
            <person name="Palme K."/>
            <person name="Benes V."/>
            <person name="Rechmann S."/>
            <person name="Ansorge W."/>
            <person name="Cooke R."/>
            <person name="Berger C."/>
            <person name="Delseny M."/>
            <person name="Voet M."/>
            <person name="Volckaert G."/>
            <person name="Mewes H.-W."/>
            <person name="Klosterman S."/>
            <person name="Schueller C."/>
            <person name="Chalwatzis N."/>
        </authorList>
    </citation>
    <scope>NUCLEOTIDE SEQUENCE [LARGE SCALE GENOMIC DNA]</scope>
    <source>
        <strain>cv. Columbia</strain>
    </source>
</reference>
<reference key="3">
    <citation type="journal article" date="1999" name="Nature">
        <title>Sequence and analysis of chromosome 4 of the plant Arabidopsis thaliana.</title>
        <authorList>
            <person name="Mayer K.F.X."/>
            <person name="Schueller C."/>
            <person name="Wambutt R."/>
            <person name="Murphy G."/>
            <person name="Volckaert G."/>
            <person name="Pohl T."/>
            <person name="Duesterhoeft A."/>
            <person name="Stiekema W."/>
            <person name="Entian K.-D."/>
            <person name="Terryn N."/>
            <person name="Harris B."/>
            <person name="Ansorge W."/>
            <person name="Brandt P."/>
            <person name="Grivell L.A."/>
            <person name="Rieger M."/>
            <person name="Weichselgartner M."/>
            <person name="de Simone V."/>
            <person name="Obermaier B."/>
            <person name="Mache R."/>
            <person name="Mueller M."/>
            <person name="Kreis M."/>
            <person name="Delseny M."/>
            <person name="Puigdomenech P."/>
            <person name="Watson M."/>
            <person name="Schmidtheini T."/>
            <person name="Reichert B."/>
            <person name="Portetelle D."/>
            <person name="Perez-Alonso M."/>
            <person name="Boutry M."/>
            <person name="Bancroft I."/>
            <person name="Vos P."/>
            <person name="Hoheisel J."/>
            <person name="Zimmermann W."/>
            <person name="Wedler H."/>
            <person name="Ridley P."/>
            <person name="Langham S.-A."/>
            <person name="McCullagh B."/>
            <person name="Bilham L."/>
            <person name="Robben J."/>
            <person name="van der Schueren J."/>
            <person name="Grymonprez B."/>
            <person name="Chuang Y.-J."/>
            <person name="Vandenbussche F."/>
            <person name="Braeken M."/>
            <person name="Weltjens I."/>
            <person name="Voet M."/>
            <person name="Bastiaens I."/>
            <person name="Aert R."/>
            <person name="Defoor E."/>
            <person name="Weitzenegger T."/>
            <person name="Bothe G."/>
            <person name="Ramsperger U."/>
            <person name="Hilbert H."/>
            <person name="Braun M."/>
            <person name="Holzer E."/>
            <person name="Brandt A."/>
            <person name="Peters S."/>
            <person name="van Staveren M."/>
            <person name="Dirkse W."/>
            <person name="Mooijman P."/>
            <person name="Klein Lankhorst R."/>
            <person name="Rose M."/>
            <person name="Hauf J."/>
            <person name="Koetter P."/>
            <person name="Berneiser S."/>
            <person name="Hempel S."/>
            <person name="Feldpausch M."/>
            <person name="Lamberth S."/>
            <person name="Van den Daele H."/>
            <person name="De Keyser A."/>
            <person name="Buysshaert C."/>
            <person name="Gielen J."/>
            <person name="Villarroel R."/>
            <person name="De Clercq R."/>
            <person name="van Montagu M."/>
            <person name="Rogers J."/>
            <person name="Cronin A."/>
            <person name="Quail M.A."/>
            <person name="Bray-Allen S."/>
            <person name="Clark L."/>
            <person name="Doggett J."/>
            <person name="Hall S."/>
            <person name="Kay M."/>
            <person name="Lennard N."/>
            <person name="McLay K."/>
            <person name="Mayes R."/>
            <person name="Pettett A."/>
            <person name="Rajandream M.A."/>
            <person name="Lyne M."/>
            <person name="Benes V."/>
            <person name="Rechmann S."/>
            <person name="Borkova D."/>
            <person name="Bloecker H."/>
            <person name="Scharfe M."/>
            <person name="Grimm M."/>
            <person name="Loehnert T.-H."/>
            <person name="Dose S."/>
            <person name="de Haan M."/>
            <person name="Maarse A.C."/>
            <person name="Schaefer M."/>
            <person name="Mueller-Auer S."/>
            <person name="Gabel C."/>
            <person name="Fuchs M."/>
            <person name="Fartmann B."/>
            <person name="Granderath K."/>
            <person name="Dauner D."/>
            <person name="Herzl A."/>
            <person name="Neumann S."/>
            <person name="Argiriou A."/>
            <person name="Vitale D."/>
            <person name="Liguori R."/>
            <person name="Piravandi E."/>
            <person name="Massenet O."/>
            <person name="Quigley F."/>
            <person name="Clabauld G."/>
            <person name="Muendlein A."/>
            <person name="Felber R."/>
            <person name="Schnabl S."/>
            <person name="Hiller R."/>
            <person name="Schmidt W."/>
            <person name="Lecharny A."/>
            <person name="Aubourg S."/>
            <person name="Chefdor F."/>
            <person name="Cooke R."/>
            <person name="Berger C."/>
            <person name="Monfort A."/>
            <person name="Casacuberta E."/>
            <person name="Gibbons T."/>
            <person name="Weber N."/>
            <person name="Vandenbol M."/>
            <person name="Bargues M."/>
            <person name="Terol J."/>
            <person name="Torres A."/>
            <person name="Perez-Perez A."/>
            <person name="Purnelle B."/>
            <person name="Bent E."/>
            <person name="Johnson S."/>
            <person name="Tacon D."/>
            <person name="Jesse T."/>
            <person name="Heijnen L."/>
            <person name="Schwarz S."/>
            <person name="Scholler P."/>
            <person name="Heber S."/>
            <person name="Francs P."/>
            <person name="Bielke C."/>
            <person name="Frishman D."/>
            <person name="Haase D."/>
            <person name="Lemcke K."/>
            <person name="Mewes H.-W."/>
            <person name="Stocker S."/>
            <person name="Zaccaria P."/>
            <person name="Bevan M."/>
            <person name="Wilson R.K."/>
            <person name="de la Bastide M."/>
            <person name="Habermann K."/>
            <person name="Parnell L."/>
            <person name="Dedhia N."/>
            <person name="Gnoj L."/>
            <person name="Schutz K."/>
            <person name="Huang E."/>
            <person name="Spiegel L."/>
            <person name="Sekhon M."/>
            <person name="Murray J."/>
            <person name="Sheet P."/>
            <person name="Cordes M."/>
            <person name="Abu-Threideh J."/>
            <person name="Stoneking T."/>
            <person name="Kalicki J."/>
            <person name="Graves T."/>
            <person name="Harmon G."/>
            <person name="Edwards J."/>
            <person name="Latreille P."/>
            <person name="Courtney L."/>
            <person name="Cloud J."/>
            <person name="Abbott A."/>
            <person name="Scott K."/>
            <person name="Johnson D."/>
            <person name="Minx P."/>
            <person name="Bentley D."/>
            <person name="Fulton B."/>
            <person name="Miller N."/>
            <person name="Greco T."/>
            <person name="Kemp K."/>
            <person name="Kramer J."/>
            <person name="Fulton L."/>
            <person name="Mardis E."/>
            <person name="Dante M."/>
            <person name="Pepin K."/>
            <person name="Hillier L.W."/>
            <person name="Nelson J."/>
            <person name="Spieth J."/>
            <person name="Ryan E."/>
            <person name="Andrews S."/>
            <person name="Geisel C."/>
            <person name="Layman D."/>
            <person name="Du H."/>
            <person name="Ali J."/>
            <person name="Berghoff A."/>
            <person name="Jones K."/>
            <person name="Drone K."/>
            <person name="Cotton M."/>
            <person name="Joshu C."/>
            <person name="Antonoiu B."/>
            <person name="Zidanic M."/>
            <person name="Strong C."/>
            <person name="Sun H."/>
            <person name="Lamar B."/>
            <person name="Yordan C."/>
            <person name="Ma P."/>
            <person name="Zhong J."/>
            <person name="Preston R."/>
            <person name="Vil D."/>
            <person name="Shekher M."/>
            <person name="Matero A."/>
            <person name="Shah R."/>
            <person name="Swaby I.K."/>
            <person name="O'Shaughnessy A."/>
            <person name="Rodriguez M."/>
            <person name="Hoffman J."/>
            <person name="Till S."/>
            <person name="Granat S."/>
            <person name="Shohdy N."/>
            <person name="Hasegawa A."/>
            <person name="Hameed A."/>
            <person name="Lodhi M."/>
            <person name="Johnson A."/>
            <person name="Chen E."/>
            <person name="Marra M.A."/>
            <person name="Martienssen R."/>
            <person name="McCombie W.R."/>
        </authorList>
    </citation>
    <scope>NUCLEOTIDE SEQUENCE [LARGE SCALE GENOMIC DNA]</scope>
    <source>
        <strain>cv. Columbia</strain>
    </source>
</reference>
<reference key="4">
    <citation type="journal article" date="2017" name="Plant J.">
        <title>Araport11: a complete reannotation of the Arabidopsis thaliana reference genome.</title>
        <authorList>
            <person name="Cheng C.Y."/>
            <person name="Krishnakumar V."/>
            <person name="Chan A.P."/>
            <person name="Thibaud-Nissen F."/>
            <person name="Schobel S."/>
            <person name="Town C.D."/>
        </authorList>
    </citation>
    <scope>GENOME REANNOTATION</scope>
    <source>
        <strain>cv. Columbia</strain>
    </source>
</reference>
<reference key="5">
    <citation type="journal article" date="2003" name="Science">
        <title>Empirical analysis of transcriptional activity in the Arabidopsis genome.</title>
        <authorList>
            <person name="Yamada K."/>
            <person name="Lim J."/>
            <person name="Dale J.M."/>
            <person name="Chen H."/>
            <person name="Shinn P."/>
            <person name="Palm C.J."/>
            <person name="Southwick A.M."/>
            <person name="Wu H.C."/>
            <person name="Kim C.J."/>
            <person name="Nguyen M."/>
            <person name="Pham P.K."/>
            <person name="Cheuk R.F."/>
            <person name="Karlin-Newmann G."/>
            <person name="Liu S.X."/>
            <person name="Lam B."/>
            <person name="Sakano H."/>
            <person name="Wu T."/>
            <person name="Yu G."/>
            <person name="Miranda M."/>
            <person name="Quach H.L."/>
            <person name="Tripp M."/>
            <person name="Chang C.H."/>
            <person name="Lee J.M."/>
            <person name="Toriumi M.J."/>
            <person name="Chan M.M."/>
            <person name="Tang C.C."/>
            <person name="Onodera C.S."/>
            <person name="Deng J.M."/>
            <person name="Akiyama K."/>
            <person name="Ansari Y."/>
            <person name="Arakawa T."/>
            <person name="Banh J."/>
            <person name="Banno F."/>
            <person name="Bowser L."/>
            <person name="Brooks S.Y."/>
            <person name="Carninci P."/>
            <person name="Chao Q."/>
            <person name="Choy N."/>
            <person name="Enju A."/>
            <person name="Goldsmith A.D."/>
            <person name="Gurjal M."/>
            <person name="Hansen N.F."/>
            <person name="Hayashizaki Y."/>
            <person name="Johnson-Hopson C."/>
            <person name="Hsuan V.W."/>
            <person name="Iida K."/>
            <person name="Karnes M."/>
            <person name="Khan S."/>
            <person name="Koesema E."/>
            <person name="Ishida J."/>
            <person name="Jiang P.X."/>
            <person name="Jones T."/>
            <person name="Kawai J."/>
            <person name="Kamiya A."/>
            <person name="Meyers C."/>
            <person name="Nakajima M."/>
            <person name="Narusaka M."/>
            <person name="Seki M."/>
            <person name="Sakurai T."/>
            <person name="Satou M."/>
            <person name="Tamse R."/>
            <person name="Vaysberg M."/>
            <person name="Wallender E.K."/>
            <person name="Wong C."/>
            <person name="Yamamura Y."/>
            <person name="Yuan S."/>
            <person name="Shinozaki K."/>
            <person name="Davis R.W."/>
            <person name="Theologis A."/>
            <person name="Ecker J.R."/>
        </authorList>
    </citation>
    <scope>NUCLEOTIDE SEQUENCE [LARGE SCALE MRNA]</scope>
    <source>
        <strain>cv. Columbia</strain>
    </source>
</reference>
<reference key="6">
    <citation type="journal article" date="2004" name="Plant Physiol.">
        <title>Gene-specific involvement of beta-oxidation in wound-activated responses in Arabidopsis.</title>
        <authorList>
            <person name="Cruz-Castillo M."/>
            <person name="Martinez C."/>
            <person name="Buchala A."/>
            <person name="Metraux J.-P."/>
            <person name="Leon J."/>
        </authorList>
    </citation>
    <scope>INDUCTION</scope>
</reference>
<reference key="7">
    <citation type="journal article" date="2005" name="J. Mol. Biol.">
        <title>Acyl-CoA oxidase 1 from Arabidopsis thaliana. Structure of a key enzyme in plant lipid metabolism.</title>
        <authorList>
            <person name="Pedersen L."/>
            <person name="Henriksen A."/>
        </authorList>
    </citation>
    <scope>X-RAY CRYSTALLOGRAPHY (2.0 ANGSTROMS) OF 1-659 OF MUTANT LEU-155 IN COMPLEX WITH FAD</scope>
    <scope>SUBUNIT</scope>
    <scope>ACTIVE SITE</scope>
    <scope>DISULFIDE BOND</scope>
</reference>
<gene>
    <name evidence="5" type="primary">ACX1</name>
    <name evidence="8" type="ordered locus">At4g16760</name>
    <name evidence="9" type="ORF">dl4405c</name>
    <name evidence="10" type="ORF">FCAALL.119</name>
</gene>
<evidence type="ECO:0000255" key="1"/>
<evidence type="ECO:0000269" key="2">
    <source>
    </source>
</evidence>
<evidence type="ECO:0000269" key="3">
    <source>
    </source>
</evidence>
<evidence type="ECO:0000269" key="4">
    <source>
    </source>
</evidence>
<evidence type="ECO:0000303" key="5">
    <source>
    </source>
</evidence>
<evidence type="ECO:0000305" key="6"/>
<evidence type="ECO:0000305" key="7">
    <source>
    </source>
</evidence>
<evidence type="ECO:0000312" key="8">
    <source>
        <dbReference type="Araport" id="AT4G16760"/>
    </source>
</evidence>
<evidence type="ECO:0000312" key="9">
    <source>
        <dbReference type="EMBL" id="CAB10450.1"/>
    </source>
</evidence>
<evidence type="ECO:0000312" key="10">
    <source>
        <dbReference type="EMBL" id="CAB78718.1"/>
    </source>
</evidence>
<evidence type="ECO:0007744" key="11">
    <source>
        <dbReference type="PDB" id="1W07"/>
    </source>
</evidence>
<evidence type="ECO:0007829" key="12">
    <source>
        <dbReference type="PDB" id="1W07"/>
    </source>
</evidence>
<dbReference type="EC" id="1.3.3.6" evidence="2"/>
<dbReference type="EMBL" id="AF057044">
    <property type="protein sequence ID" value="AAC13498.1"/>
    <property type="molecule type" value="mRNA"/>
</dbReference>
<dbReference type="EMBL" id="Z97341">
    <property type="protein sequence ID" value="CAB10450.1"/>
    <property type="status" value="ALT_SEQ"/>
    <property type="molecule type" value="Genomic_DNA"/>
</dbReference>
<dbReference type="EMBL" id="AL161544">
    <property type="protein sequence ID" value="CAB78718.1"/>
    <property type="status" value="ALT_SEQ"/>
    <property type="molecule type" value="Genomic_DNA"/>
</dbReference>
<dbReference type="EMBL" id="CP002687">
    <property type="protein sequence ID" value="AEE83798.1"/>
    <property type="molecule type" value="Genomic_DNA"/>
</dbReference>
<dbReference type="EMBL" id="AY058849">
    <property type="protein sequence ID" value="AAL24237.1"/>
    <property type="molecule type" value="mRNA"/>
</dbReference>
<dbReference type="EMBL" id="BT001067">
    <property type="protein sequence ID" value="AAN46824.1"/>
    <property type="molecule type" value="mRNA"/>
</dbReference>
<dbReference type="PIR" id="H71434">
    <property type="entry name" value="H71434"/>
</dbReference>
<dbReference type="PIR" id="T52121">
    <property type="entry name" value="T52121"/>
</dbReference>
<dbReference type="RefSeq" id="NP_567513.4">
    <molecule id="O65202-1"/>
    <property type="nucleotide sequence ID" value="NM_117778.8"/>
</dbReference>
<dbReference type="PDB" id="1W07">
    <property type="method" value="X-ray"/>
    <property type="resolution" value="2.00 A"/>
    <property type="chains" value="A/B=1-659"/>
</dbReference>
<dbReference type="PDBsum" id="1W07"/>
<dbReference type="SMR" id="O65202"/>
<dbReference type="BioGRID" id="12674">
    <property type="interactions" value="21"/>
</dbReference>
<dbReference type="FunCoup" id="O65202">
    <property type="interactions" value="2896"/>
</dbReference>
<dbReference type="IntAct" id="O65202">
    <property type="interactions" value="2"/>
</dbReference>
<dbReference type="STRING" id="3702.O65202"/>
<dbReference type="MetOSite" id="O65202"/>
<dbReference type="PaxDb" id="3702-AT4G16760.1"/>
<dbReference type="ProteomicsDB" id="244350">
    <molecule id="O65202-1"/>
</dbReference>
<dbReference type="EnsemblPlants" id="AT4G16760.1">
    <molecule id="O65202-1"/>
    <property type="protein sequence ID" value="AT4G16760.1"/>
    <property type="gene ID" value="AT4G16760"/>
</dbReference>
<dbReference type="GeneID" id="827381"/>
<dbReference type="Gramene" id="AT4G16760.1">
    <molecule id="O65202-1"/>
    <property type="protein sequence ID" value="AT4G16760.1"/>
    <property type="gene ID" value="AT4G16760"/>
</dbReference>
<dbReference type="KEGG" id="ath:AT4G16760"/>
<dbReference type="Araport" id="AT4G16760"/>
<dbReference type="TAIR" id="AT4G16760">
    <property type="gene designation" value="ACX1"/>
</dbReference>
<dbReference type="eggNOG" id="KOG0136">
    <property type="taxonomic scope" value="Eukaryota"/>
</dbReference>
<dbReference type="InParanoid" id="O65202"/>
<dbReference type="OMA" id="AHAQYMV"/>
<dbReference type="PhylomeDB" id="O65202"/>
<dbReference type="BioCyc" id="ARA:AT4G16760-MONOMER"/>
<dbReference type="BioCyc" id="MetaCyc:AT4G16760-MONOMER"/>
<dbReference type="BRENDA" id="1.3.3.6">
    <property type="organism ID" value="399"/>
</dbReference>
<dbReference type="CD-CODE" id="4299E36E">
    <property type="entry name" value="Nucleolus"/>
</dbReference>
<dbReference type="EvolutionaryTrace" id="O65202"/>
<dbReference type="PRO" id="PR:O65202"/>
<dbReference type="Proteomes" id="UP000006548">
    <property type="component" value="Chromosome 4"/>
</dbReference>
<dbReference type="ExpressionAtlas" id="O65202">
    <property type="expression patterns" value="baseline and differential"/>
</dbReference>
<dbReference type="GO" id="GO:0005829">
    <property type="term" value="C:cytosol"/>
    <property type="evidence" value="ECO:0007005"/>
    <property type="project" value="TAIR"/>
</dbReference>
<dbReference type="GO" id="GO:0005777">
    <property type="term" value="C:peroxisome"/>
    <property type="evidence" value="ECO:0000314"/>
    <property type="project" value="TAIR"/>
</dbReference>
<dbReference type="GO" id="GO:0009506">
    <property type="term" value="C:plasmodesma"/>
    <property type="evidence" value="ECO:0007005"/>
    <property type="project" value="TAIR"/>
</dbReference>
<dbReference type="GO" id="GO:0003997">
    <property type="term" value="F:acyl-CoA oxidase activity"/>
    <property type="evidence" value="ECO:0000314"/>
    <property type="project" value="TAIR"/>
</dbReference>
<dbReference type="GO" id="GO:0071949">
    <property type="term" value="F:FAD binding"/>
    <property type="evidence" value="ECO:0007669"/>
    <property type="project" value="InterPro"/>
</dbReference>
<dbReference type="GO" id="GO:0006635">
    <property type="term" value="P:fatty acid beta-oxidation"/>
    <property type="evidence" value="ECO:0000314"/>
    <property type="project" value="TAIR"/>
</dbReference>
<dbReference type="GO" id="GO:0009695">
    <property type="term" value="P:jasmonic acid biosynthetic process"/>
    <property type="evidence" value="ECO:0000315"/>
    <property type="project" value="TAIR"/>
</dbReference>
<dbReference type="GO" id="GO:0001676">
    <property type="term" value="P:long-chain fatty acid metabolic process"/>
    <property type="evidence" value="ECO:0000315"/>
    <property type="project" value="TAIR"/>
</dbReference>
<dbReference type="GO" id="GO:0009620">
    <property type="term" value="P:response to fungus"/>
    <property type="evidence" value="ECO:0000270"/>
    <property type="project" value="TAIR"/>
</dbReference>
<dbReference type="GO" id="GO:0009611">
    <property type="term" value="P:response to wounding"/>
    <property type="evidence" value="ECO:0000270"/>
    <property type="project" value="TAIR"/>
</dbReference>
<dbReference type="FunFam" id="1.10.540.10:FF:000015">
    <property type="entry name" value="Acyl-coenzyme A oxidase"/>
    <property type="match status" value="1"/>
</dbReference>
<dbReference type="FunFam" id="1.20.140.10:FF:000005">
    <property type="entry name" value="Acyl-coenzyme A oxidase"/>
    <property type="match status" value="1"/>
</dbReference>
<dbReference type="FunFam" id="1.20.140.10:FF:000013">
    <property type="entry name" value="Acyl-coenzyme A oxidase"/>
    <property type="match status" value="1"/>
</dbReference>
<dbReference type="FunFam" id="2.40.110.10:FF:000075">
    <property type="entry name" value="Acyl-coenzyme A oxidase"/>
    <property type="match status" value="1"/>
</dbReference>
<dbReference type="Gene3D" id="1.10.540.10">
    <property type="entry name" value="Acyl-CoA dehydrogenase/oxidase, N-terminal domain"/>
    <property type="match status" value="1"/>
</dbReference>
<dbReference type="Gene3D" id="2.40.110.10">
    <property type="entry name" value="Butyryl-CoA Dehydrogenase, subunit A, domain 2"/>
    <property type="match status" value="1"/>
</dbReference>
<dbReference type="Gene3D" id="1.20.140.10">
    <property type="entry name" value="Butyryl-CoA Dehydrogenase, subunit A, domain 3"/>
    <property type="match status" value="2"/>
</dbReference>
<dbReference type="InterPro" id="IPR055060">
    <property type="entry name" value="ACOX_C_alpha1"/>
</dbReference>
<dbReference type="InterPro" id="IPR029320">
    <property type="entry name" value="Acyl-CoA_ox_N"/>
</dbReference>
<dbReference type="InterPro" id="IPR006091">
    <property type="entry name" value="Acyl-CoA_Oxase/DH_mid-dom"/>
</dbReference>
<dbReference type="InterPro" id="IPR046373">
    <property type="entry name" value="Acyl-CoA_Oxase/DH_mid-dom_sf"/>
</dbReference>
<dbReference type="InterPro" id="IPR012258">
    <property type="entry name" value="Acyl-CoA_oxidase"/>
</dbReference>
<dbReference type="InterPro" id="IPR002655">
    <property type="entry name" value="Acyl-CoA_oxidase_C"/>
</dbReference>
<dbReference type="InterPro" id="IPR036250">
    <property type="entry name" value="AcylCo_DH-like_C"/>
</dbReference>
<dbReference type="InterPro" id="IPR037069">
    <property type="entry name" value="AcylCoA_DH/ox_N_sf"/>
</dbReference>
<dbReference type="InterPro" id="IPR009100">
    <property type="entry name" value="AcylCoA_DH/oxidase_NM_dom_sf"/>
</dbReference>
<dbReference type="PANTHER" id="PTHR10909">
    <property type="entry name" value="ELECTRON TRANSPORT OXIDOREDUCTASE"/>
    <property type="match status" value="1"/>
</dbReference>
<dbReference type="PANTHER" id="PTHR10909:SF250">
    <property type="entry name" value="PEROXISOMAL ACYL-COENZYME A OXIDASE 1"/>
    <property type="match status" value="1"/>
</dbReference>
<dbReference type="Pfam" id="PF01756">
    <property type="entry name" value="ACOX"/>
    <property type="match status" value="1"/>
</dbReference>
<dbReference type="Pfam" id="PF22924">
    <property type="entry name" value="ACOX_C_alpha1"/>
    <property type="match status" value="1"/>
</dbReference>
<dbReference type="Pfam" id="PF02770">
    <property type="entry name" value="Acyl-CoA_dh_M"/>
    <property type="match status" value="1"/>
</dbReference>
<dbReference type="Pfam" id="PF14749">
    <property type="entry name" value="Acyl-CoA_ox_N"/>
    <property type="match status" value="1"/>
</dbReference>
<dbReference type="PIRSF" id="PIRSF000168">
    <property type="entry name" value="Acyl-CoA_oxidase"/>
    <property type="match status" value="1"/>
</dbReference>
<dbReference type="SUPFAM" id="SSF47203">
    <property type="entry name" value="Acyl-CoA dehydrogenase C-terminal domain-like"/>
    <property type="match status" value="2"/>
</dbReference>
<dbReference type="SUPFAM" id="SSF56645">
    <property type="entry name" value="Acyl-CoA dehydrogenase NM domain-like"/>
    <property type="match status" value="1"/>
</dbReference>
<comment type="function">
    <text evidence="2">Catalyzes the desaturation of both long- and medium-chain acyl-CoAs to 2-trans-enoyl-CoAs. Most active with C14-CoA. Activity on long-chain mono-unsaturated substrates is 40% higher than with the corresponding saturated substrates. Seems to be an important factor in the general metabolism of root tips. May be involved in the biosynthesis of jasmonic acid.</text>
</comment>
<comment type="catalytic activity">
    <reaction evidence="2">
        <text>a 2,3-saturated acyl-CoA + O2 = a (2E)-enoyl-CoA + H2O2</text>
        <dbReference type="Rhea" id="RHEA:38959"/>
        <dbReference type="ChEBI" id="CHEBI:15379"/>
        <dbReference type="ChEBI" id="CHEBI:16240"/>
        <dbReference type="ChEBI" id="CHEBI:58856"/>
        <dbReference type="ChEBI" id="CHEBI:65111"/>
        <dbReference type="EC" id="1.3.3.6"/>
    </reaction>
    <physiologicalReaction direction="left-to-right" evidence="2">
        <dbReference type="Rhea" id="RHEA:38960"/>
    </physiologicalReaction>
</comment>
<comment type="cofactor">
    <cofactor evidence="4">
        <name>FAD</name>
        <dbReference type="ChEBI" id="CHEBI:57692"/>
    </cofactor>
    <text evidence="4">Binds 1 FAD per subunit.</text>
</comment>
<comment type="biophysicochemical properties">
    <kinetics>
        <KM>5.3 uM for C14-CoA</KM>
    </kinetics>
</comment>
<comment type="subunit">
    <text evidence="4">Homodimer.</text>
</comment>
<comment type="subcellular location">
    <subcellularLocation>
        <location evidence="1">Peroxisome</location>
    </subcellularLocation>
</comment>
<comment type="alternative products">
    <event type="alternative splicing"/>
    <isoform>
        <id>O65202-1</id>
        <name>1</name>
        <sequence type="displayed"/>
    </isoform>
    <text evidence="6">A number of isoforms are produced. According to EST sequences.</text>
</comment>
<comment type="tissue specificity">
    <text evidence="2">Expressed mainly in flowers and young seedlings. Lower expression in roots, leaves and bracts.</text>
</comment>
<comment type="developmental stage">
    <text evidence="2">Induced by seed imbibition with a peak at day 2 and then declines to reach a basal level 4 days after sowing.</text>
</comment>
<comment type="induction">
    <text evidence="3">Induced by dehydration, abscisic acid (ABA) and jasmonic acid (JA), and locally and systemically by wounding.</text>
</comment>
<comment type="similarity">
    <text evidence="6">Belongs to the acyl-CoA oxidase family.</text>
</comment>
<comment type="sequence caution" evidence="6">
    <conflict type="erroneous gene model prediction">
        <sequence resource="EMBL-CDS" id="CAB10450"/>
    </conflict>
</comment>
<comment type="sequence caution" evidence="6">
    <conflict type="erroneous gene model prediction">
        <sequence resource="EMBL-CDS" id="CAB78718"/>
    </conflict>
</comment>
<accession>O65202</accession>
<accession>O23518</accession>
<sequence length="664" mass="74302">MEGIDHLADERNKAEFDVEDMKIVWAGSRHAFEVSDRIARLVASDPVFEKSNRARLSRKELFKSTLRKCAHAFKRIIELRLNEEEAGRLRHFIDQPAYVDLHWGMFVPAIKGQGTEEQQKKWLSLANKMQIIGCYAQTELGHGSNVQGLETTATFDPKTDEFVIHTPTQTASKWWPGGLGKVSTHAVVYARLITNGKDYGIHGFIVQLRSLEDHSPLPNITVGDIGTKMGNGAYNSMDNGFLMFDHVRIPRDQMLMRLSKVTREGEYVPSDVPKQLVYGTMVYVRQTIVADASNALSRAVCIATRYSAVRRQFGAHNGGIETQVIDYKTQQNRLFPLLASAYAFRFVGEWLKWLYTDVTERLAASDFATLPEAHACTAGLKSLTTTATADGIEECRKLCGGHGYLWCSGLPELFAVYVPACTYEGDNVVLQLQVARFLMKTVAQLGSGKVPVGTTAYMGRAAHLLQCRSGVQKAEDWLNPDVVLEAFEARALRMAVTCAKNLSKFENQEQGFQELLADLVEAAIAHCQLIVVSKFIAKLEQDIGGKGVKKQLNNLCYIYALYLLHKHLGDFLSTNCITPKQASLANDQLRSLYTQVRPNAVALVDAFNYTDHYLNSVLGRYDGNVYPKLFEEALKDPLNDSVVPDGYQEYLRPVLQQQLRTARL</sequence>
<organism>
    <name type="scientific">Arabidopsis thaliana</name>
    <name type="common">Mouse-ear cress</name>
    <dbReference type="NCBI Taxonomy" id="3702"/>
    <lineage>
        <taxon>Eukaryota</taxon>
        <taxon>Viridiplantae</taxon>
        <taxon>Streptophyta</taxon>
        <taxon>Embryophyta</taxon>
        <taxon>Tracheophyta</taxon>
        <taxon>Spermatophyta</taxon>
        <taxon>Magnoliopsida</taxon>
        <taxon>eudicotyledons</taxon>
        <taxon>Gunneridae</taxon>
        <taxon>Pentapetalae</taxon>
        <taxon>rosids</taxon>
        <taxon>malvids</taxon>
        <taxon>Brassicales</taxon>
        <taxon>Brassicaceae</taxon>
        <taxon>Camelineae</taxon>
        <taxon>Arabidopsis</taxon>
    </lineage>
</organism>